<organismHost>
    <name type="scientific">Mycobacterium</name>
    <dbReference type="NCBI Taxonomy" id="1763"/>
</organismHost>
<feature type="chain" id="PRO_0000164801" description="Gene 64 protein">
    <location>
        <begin position="1"/>
        <end position="138"/>
    </location>
</feature>
<name>VG64_BPMD2</name>
<gene>
    <name type="primary">64</name>
</gene>
<sequence>MTATNQKVAHMKKAIATAAIALAAGLGLVGCTSDADVASENLSKAADNFEIPRRIVFFNGITDKYLLEIQGRCSIEPDTGAQKLDVTCKQNGQFKKHFLGLSDNVTYFVEQIEGANVSDDFYQVNFKPQSILPDIELR</sequence>
<keyword id="KW-1185">Reference proteome</keyword>
<proteinExistence type="predicted"/>
<protein>
    <recommendedName>
        <fullName>Gene 64 protein</fullName>
    </recommendedName>
    <alternativeName>
        <fullName>Gp64</fullName>
    </alternativeName>
</protein>
<organism>
    <name type="scientific">Mycobacterium phage D29</name>
    <name type="common">Mycobacteriophage D29</name>
    <dbReference type="NCBI Taxonomy" id="28369"/>
    <lineage>
        <taxon>Viruses</taxon>
        <taxon>Duplodnaviria</taxon>
        <taxon>Heunggongvirae</taxon>
        <taxon>Uroviricota</taxon>
        <taxon>Caudoviricetes</taxon>
        <taxon>Fromanvirus</taxon>
    </lineage>
</organism>
<accession>O64256</accession>
<reference key="1">
    <citation type="journal article" date="1998" name="J. Mol. Biol.">
        <title>Genome structure of mycobacteriophage D29: implications for phage evolution.</title>
        <authorList>
            <person name="Ford M.E."/>
            <person name="Sarkis G.J."/>
            <person name="Belanger A.E."/>
            <person name="Hendrix R.W."/>
            <person name="Hatfull G.F."/>
        </authorList>
    </citation>
    <scope>NUCLEOTIDE SEQUENCE [LARGE SCALE GENOMIC DNA]</scope>
</reference>
<reference key="2">
    <citation type="submission" date="2021-06" db="EMBL/GenBank/DDBJ databases">
        <authorList>
            <person name="Ford M.E."/>
            <person name="Sarkis G.J."/>
            <person name="Belanger A.E."/>
            <person name="Hendrix R.W."/>
            <person name="Hatfull G.F."/>
        </authorList>
    </citation>
    <scope>SEQUENCE REVISION TO N-TERMINUS</scope>
</reference>
<dbReference type="EMBL" id="AF022214">
    <property type="protein sequence ID" value="AAC18506.2"/>
    <property type="molecule type" value="Genomic_DNA"/>
</dbReference>
<dbReference type="PIR" id="G72807">
    <property type="entry name" value="G72807"/>
</dbReference>
<dbReference type="RefSeq" id="NP_046881.1">
    <property type="nucleotide sequence ID" value="NC_001900.1"/>
</dbReference>
<dbReference type="GeneID" id="1261633"/>
<dbReference type="KEGG" id="vg:1261633"/>
<dbReference type="OrthoDB" id="19721at10239"/>
<dbReference type="Proteomes" id="UP000002131">
    <property type="component" value="Segment"/>
</dbReference>